<organism>
    <name type="scientific">Aeromonas salmonicida (strain A449)</name>
    <dbReference type="NCBI Taxonomy" id="382245"/>
    <lineage>
        <taxon>Bacteria</taxon>
        <taxon>Pseudomonadati</taxon>
        <taxon>Pseudomonadota</taxon>
        <taxon>Gammaproteobacteria</taxon>
        <taxon>Aeromonadales</taxon>
        <taxon>Aeromonadaceae</taxon>
        <taxon>Aeromonas</taxon>
    </lineage>
</organism>
<dbReference type="EC" id="5.2.1.8" evidence="1"/>
<dbReference type="EMBL" id="CP000644">
    <property type="protein sequence ID" value="ABO89963.1"/>
    <property type="molecule type" value="Genomic_DNA"/>
</dbReference>
<dbReference type="RefSeq" id="WP_005315366.1">
    <property type="nucleotide sequence ID" value="NC_009348.1"/>
</dbReference>
<dbReference type="SMR" id="A4SM41"/>
<dbReference type="STRING" id="29491.GCA_000820065_02740"/>
<dbReference type="GeneID" id="79879612"/>
<dbReference type="KEGG" id="asa:ASA_1888"/>
<dbReference type="eggNOG" id="COG0544">
    <property type="taxonomic scope" value="Bacteria"/>
</dbReference>
<dbReference type="HOGENOM" id="CLU_033058_2_0_6"/>
<dbReference type="Proteomes" id="UP000000225">
    <property type="component" value="Chromosome"/>
</dbReference>
<dbReference type="GO" id="GO:0005737">
    <property type="term" value="C:cytoplasm"/>
    <property type="evidence" value="ECO:0007669"/>
    <property type="project" value="UniProtKB-SubCell"/>
</dbReference>
<dbReference type="GO" id="GO:0003755">
    <property type="term" value="F:peptidyl-prolyl cis-trans isomerase activity"/>
    <property type="evidence" value="ECO:0007669"/>
    <property type="project" value="UniProtKB-UniRule"/>
</dbReference>
<dbReference type="GO" id="GO:0044183">
    <property type="term" value="F:protein folding chaperone"/>
    <property type="evidence" value="ECO:0007669"/>
    <property type="project" value="TreeGrafter"/>
</dbReference>
<dbReference type="GO" id="GO:0043022">
    <property type="term" value="F:ribosome binding"/>
    <property type="evidence" value="ECO:0007669"/>
    <property type="project" value="TreeGrafter"/>
</dbReference>
<dbReference type="GO" id="GO:0051083">
    <property type="term" value="P:'de novo' cotranslational protein folding"/>
    <property type="evidence" value="ECO:0007669"/>
    <property type="project" value="TreeGrafter"/>
</dbReference>
<dbReference type="GO" id="GO:0051301">
    <property type="term" value="P:cell division"/>
    <property type="evidence" value="ECO:0007669"/>
    <property type="project" value="UniProtKB-KW"/>
</dbReference>
<dbReference type="GO" id="GO:0061077">
    <property type="term" value="P:chaperone-mediated protein folding"/>
    <property type="evidence" value="ECO:0007669"/>
    <property type="project" value="TreeGrafter"/>
</dbReference>
<dbReference type="GO" id="GO:0015031">
    <property type="term" value="P:protein transport"/>
    <property type="evidence" value="ECO:0007669"/>
    <property type="project" value="UniProtKB-UniRule"/>
</dbReference>
<dbReference type="GO" id="GO:0043335">
    <property type="term" value="P:protein unfolding"/>
    <property type="evidence" value="ECO:0007669"/>
    <property type="project" value="TreeGrafter"/>
</dbReference>
<dbReference type="FunFam" id="3.10.50.40:FF:000001">
    <property type="entry name" value="Trigger factor"/>
    <property type="match status" value="1"/>
</dbReference>
<dbReference type="Gene3D" id="3.10.50.40">
    <property type="match status" value="1"/>
</dbReference>
<dbReference type="Gene3D" id="3.30.70.1050">
    <property type="entry name" value="Trigger factor ribosome-binding domain"/>
    <property type="match status" value="1"/>
</dbReference>
<dbReference type="Gene3D" id="1.10.3120.10">
    <property type="entry name" value="Trigger factor, C-terminal domain"/>
    <property type="match status" value="1"/>
</dbReference>
<dbReference type="HAMAP" id="MF_00303">
    <property type="entry name" value="Trigger_factor_Tig"/>
    <property type="match status" value="1"/>
</dbReference>
<dbReference type="InterPro" id="IPR046357">
    <property type="entry name" value="PPIase_dom_sf"/>
</dbReference>
<dbReference type="InterPro" id="IPR001179">
    <property type="entry name" value="PPIase_FKBP_dom"/>
</dbReference>
<dbReference type="InterPro" id="IPR005215">
    <property type="entry name" value="Trig_fac"/>
</dbReference>
<dbReference type="InterPro" id="IPR008880">
    <property type="entry name" value="Trigger_fac_C"/>
</dbReference>
<dbReference type="InterPro" id="IPR037041">
    <property type="entry name" value="Trigger_fac_C_sf"/>
</dbReference>
<dbReference type="InterPro" id="IPR008881">
    <property type="entry name" value="Trigger_fac_ribosome-bd_bac"/>
</dbReference>
<dbReference type="InterPro" id="IPR036611">
    <property type="entry name" value="Trigger_fac_ribosome-bd_sf"/>
</dbReference>
<dbReference type="InterPro" id="IPR027304">
    <property type="entry name" value="Trigger_fact/SurA_dom_sf"/>
</dbReference>
<dbReference type="NCBIfam" id="TIGR00115">
    <property type="entry name" value="tig"/>
    <property type="match status" value="1"/>
</dbReference>
<dbReference type="PANTHER" id="PTHR30560">
    <property type="entry name" value="TRIGGER FACTOR CHAPERONE AND PEPTIDYL-PROLYL CIS/TRANS ISOMERASE"/>
    <property type="match status" value="1"/>
</dbReference>
<dbReference type="PANTHER" id="PTHR30560:SF3">
    <property type="entry name" value="TRIGGER FACTOR-LIKE PROTEIN TIG, CHLOROPLASTIC"/>
    <property type="match status" value="1"/>
</dbReference>
<dbReference type="Pfam" id="PF00254">
    <property type="entry name" value="FKBP_C"/>
    <property type="match status" value="1"/>
</dbReference>
<dbReference type="Pfam" id="PF05698">
    <property type="entry name" value="Trigger_C"/>
    <property type="match status" value="1"/>
</dbReference>
<dbReference type="Pfam" id="PF05697">
    <property type="entry name" value="Trigger_N"/>
    <property type="match status" value="1"/>
</dbReference>
<dbReference type="PIRSF" id="PIRSF003095">
    <property type="entry name" value="Trigger_factor"/>
    <property type="match status" value="1"/>
</dbReference>
<dbReference type="SUPFAM" id="SSF54534">
    <property type="entry name" value="FKBP-like"/>
    <property type="match status" value="1"/>
</dbReference>
<dbReference type="SUPFAM" id="SSF109998">
    <property type="entry name" value="Triger factor/SurA peptide-binding domain-like"/>
    <property type="match status" value="1"/>
</dbReference>
<dbReference type="SUPFAM" id="SSF102735">
    <property type="entry name" value="Trigger factor ribosome-binding domain"/>
    <property type="match status" value="1"/>
</dbReference>
<dbReference type="PROSITE" id="PS50059">
    <property type="entry name" value="FKBP_PPIASE"/>
    <property type="match status" value="1"/>
</dbReference>
<comment type="function">
    <text evidence="1">Involved in protein export. Acts as a chaperone by maintaining the newly synthesized protein in an open conformation. Functions as a peptidyl-prolyl cis-trans isomerase.</text>
</comment>
<comment type="catalytic activity">
    <reaction evidence="1">
        <text>[protein]-peptidylproline (omega=180) = [protein]-peptidylproline (omega=0)</text>
        <dbReference type="Rhea" id="RHEA:16237"/>
        <dbReference type="Rhea" id="RHEA-COMP:10747"/>
        <dbReference type="Rhea" id="RHEA-COMP:10748"/>
        <dbReference type="ChEBI" id="CHEBI:83833"/>
        <dbReference type="ChEBI" id="CHEBI:83834"/>
        <dbReference type="EC" id="5.2.1.8"/>
    </reaction>
</comment>
<comment type="subcellular location">
    <subcellularLocation>
        <location>Cytoplasm</location>
    </subcellularLocation>
    <text evidence="1">About half TF is bound to the ribosome near the polypeptide exit tunnel while the other half is free in the cytoplasm.</text>
</comment>
<comment type="domain">
    <text evidence="1">Consists of 3 domains; the N-terminus binds the ribosome, the middle domain has PPIase activity, while the C-terminus has intrinsic chaperone activity on its own.</text>
</comment>
<comment type="similarity">
    <text evidence="1">Belongs to the FKBP-type PPIase family. Tig subfamily.</text>
</comment>
<evidence type="ECO:0000255" key="1">
    <source>
        <dbReference type="HAMAP-Rule" id="MF_00303"/>
    </source>
</evidence>
<proteinExistence type="inferred from homology"/>
<sequence>MQVSVETTQGLERRLTITVPAATVDAAVRKELNGLAKTRRIDGFRPGKAPVAIIKKMFGAMAHARVADEMMQNNFIKAIIENKLSPAGAPTMDPKEIQEGQDFEFTATFEVYPEFEVAGLETIKVEKPVATVKDEDLANMIDTLRKQHATWADVDAAAADGMRVTMDFIGSIDGEEFDGGKAEGFNLVLGAGRMIPGFEDAIMGKKAGDEFTIEVTFPADYHAENLKGKAAKFASKLIKVEEQILPELTEEFVKRFGIESGNVEELKAEVRKNMERELAQALKNSVKEQVLNGLVEANQIDLPKAAVAQEIDTLRQQALQRFGGFQGGNAPELPAELFQAQAERRVRVGLLLGDVIRTNEIKADDARVTSIIESMATAYEDPKEVIEYYQKNEQMLNGVRNLAVEDQAIDLILSKAQVTEKEVAFDEVINKSGAAA</sequence>
<accession>A4SM41</accession>
<name>TIG_AERS4</name>
<keyword id="KW-0131">Cell cycle</keyword>
<keyword id="KW-0132">Cell division</keyword>
<keyword id="KW-0143">Chaperone</keyword>
<keyword id="KW-0963">Cytoplasm</keyword>
<keyword id="KW-0413">Isomerase</keyword>
<keyword id="KW-0697">Rotamase</keyword>
<protein>
    <recommendedName>
        <fullName evidence="1">Trigger factor</fullName>
        <shortName evidence="1">TF</shortName>
        <ecNumber evidence="1">5.2.1.8</ecNumber>
    </recommendedName>
    <alternativeName>
        <fullName evidence="1">PPIase</fullName>
    </alternativeName>
</protein>
<gene>
    <name evidence="1" type="primary">tig</name>
    <name type="ordered locus">ASA_1888</name>
</gene>
<reference key="1">
    <citation type="journal article" date="2008" name="BMC Genomics">
        <title>The genome of Aeromonas salmonicida subsp. salmonicida A449: insights into the evolution of a fish pathogen.</title>
        <authorList>
            <person name="Reith M.E."/>
            <person name="Singh R.K."/>
            <person name="Curtis B."/>
            <person name="Boyd J.M."/>
            <person name="Bouevitch A."/>
            <person name="Kimball J."/>
            <person name="Munholland J."/>
            <person name="Murphy C."/>
            <person name="Sarty D."/>
            <person name="Williams J."/>
            <person name="Nash J.H."/>
            <person name="Johnson S.C."/>
            <person name="Brown L.L."/>
        </authorList>
    </citation>
    <scope>NUCLEOTIDE SEQUENCE [LARGE SCALE GENOMIC DNA]</scope>
    <source>
        <strain>A449</strain>
    </source>
</reference>
<feature type="chain" id="PRO_1000022640" description="Trigger factor">
    <location>
        <begin position="1"/>
        <end position="436"/>
    </location>
</feature>
<feature type="domain" description="PPIase FKBP-type" evidence="1">
    <location>
        <begin position="161"/>
        <end position="246"/>
    </location>
</feature>